<sequence>MGEVGESEKYLLNRHKEHHFTAGETVRDIIIGFSDGLTVPFALAAGLSGANASSSIILTAGIAEVAAGAISMGLGGYLAAKSEADHYTRELRREQEEIDTIPDTEAAEVAEILAEYGVEPHEYWPVVNSLRKNPKAWLDFMMKFELGLEKPNPRRALQSALTIAISYVLSGLIPLLPYMFIPIAQKAVVSSVIVTIFALLIFGFAKGYFTGNKPVWSALQTALIGAIASAAAFGMAKGCASSVFE</sequence>
<comment type="function">
    <text evidence="4">Vacuolar iron transporter involved in the transfer of iron ions from the cytosol to the vacuole for intracellular iron storage (PubMed:23838627). Plays an essential role in the development of blue coloration in cornflower petals (PubMed:23838627).</text>
</comment>
<comment type="catalytic activity">
    <reaction evidence="4">
        <text>Fe(2+)(in) = Fe(2+)(out)</text>
        <dbReference type="Rhea" id="RHEA:28486"/>
        <dbReference type="ChEBI" id="CHEBI:29033"/>
    </reaction>
    <physiologicalReaction direction="left-to-right" evidence="6">
        <dbReference type="Rhea" id="RHEA:28487"/>
    </physiologicalReaction>
</comment>
<comment type="subcellular location">
    <subcellularLocation>
        <location evidence="1">Vacuole membrane</location>
        <topology evidence="3">Multi-pass membrane protein</topology>
    </subcellularLocation>
</comment>
<comment type="tissue specificity">
    <text evidence="4">Expressed in petal tissues, but not in other parts of the plant, such as leaves, roots, sepals and stems.</text>
</comment>
<comment type="developmental stage">
    <text evidence="4">In petals, expression levels increase with petal maturation and highest expression is observed when petals are fully opened and exhibit their blue coloration.</text>
</comment>
<comment type="similarity">
    <text evidence="6">Belongs to the CCC1 family.</text>
</comment>
<feature type="chain" id="PRO_0000459690" description="Vacuolar iron transporter">
    <location>
        <begin position="1"/>
        <end position="245"/>
    </location>
</feature>
<feature type="topological domain" description="Cytoplasmic" evidence="6">
    <location>
        <begin position="1"/>
        <end position="28"/>
    </location>
</feature>
<feature type="transmembrane region" description="Helical" evidence="3">
    <location>
        <begin position="29"/>
        <end position="49"/>
    </location>
</feature>
<feature type="topological domain" description="Vacuolar" evidence="6">
    <location>
        <begin position="50"/>
        <end position="55"/>
    </location>
</feature>
<feature type="transmembrane region" description="Helical" evidence="3">
    <location>
        <begin position="56"/>
        <end position="76"/>
    </location>
</feature>
<feature type="topological domain" description="Cytoplasmic" evidence="6">
    <location>
        <begin position="77"/>
        <end position="162"/>
    </location>
</feature>
<feature type="transmembrane region" description="Helical" evidence="3">
    <location>
        <begin position="163"/>
        <end position="183"/>
    </location>
</feature>
<feature type="topological domain" description="Vacuolar" evidence="6">
    <location>
        <begin position="184"/>
        <end position="186"/>
    </location>
</feature>
<feature type="transmembrane region" description="Helical" evidence="3">
    <location>
        <begin position="187"/>
        <end position="207"/>
    </location>
</feature>
<feature type="topological domain" description="Cytoplasmic" evidence="6">
    <location>
        <begin position="208"/>
        <end position="214"/>
    </location>
</feature>
<feature type="transmembrane region" description="Helical" evidence="3">
    <location>
        <begin position="215"/>
        <end position="235"/>
    </location>
</feature>
<feature type="topological domain" description="Vacuolar" evidence="6">
    <location>
        <begin position="236"/>
        <end position="245"/>
    </location>
</feature>
<feature type="binding site" evidence="2">
    <location>
        <position position="94"/>
    </location>
    <ligand>
        <name>Fe cation</name>
        <dbReference type="ChEBI" id="CHEBI:24875"/>
        <label>1</label>
    </ligand>
</feature>
<feature type="binding site" evidence="2">
    <location>
        <position position="94"/>
    </location>
    <ligand>
        <name>Fe cation</name>
        <dbReference type="ChEBI" id="CHEBI:24875"/>
        <label>2</label>
    </ligand>
</feature>
<feature type="binding site" evidence="2">
    <location>
        <position position="97"/>
    </location>
    <ligand>
        <name>Fe cation</name>
        <dbReference type="ChEBI" id="CHEBI:24875"/>
        <label>1</label>
    </ligand>
</feature>
<feature type="binding site" evidence="2">
    <location>
        <position position="97"/>
    </location>
    <ligand>
        <name>Fe cation</name>
        <dbReference type="ChEBI" id="CHEBI:24875"/>
        <label>3</label>
    </ligand>
</feature>
<feature type="binding site" evidence="2">
    <location>
        <position position="105"/>
    </location>
    <ligand>
        <name>Fe cation</name>
        <dbReference type="ChEBI" id="CHEBI:24875"/>
        <label>1</label>
    </ligand>
</feature>
<feature type="binding site" evidence="2">
    <location>
        <position position="105"/>
    </location>
    <ligand>
        <name>Fe cation</name>
        <dbReference type="ChEBI" id="CHEBI:24875"/>
        <label>2</label>
    </ligand>
</feature>
<feature type="binding site" evidence="2">
    <location>
        <position position="105"/>
    </location>
    <ligand>
        <name>Fe cation</name>
        <dbReference type="ChEBI" id="CHEBI:24875"/>
        <label>3</label>
    </ligand>
</feature>
<feature type="binding site" evidence="2">
    <location>
        <position position="108"/>
    </location>
    <ligand>
        <name>Fe cation</name>
        <dbReference type="ChEBI" id="CHEBI:24875"/>
        <label>1</label>
    </ligand>
</feature>
<feature type="binding site" evidence="2">
    <location>
        <position position="108"/>
    </location>
    <ligand>
        <name>Fe cation</name>
        <dbReference type="ChEBI" id="CHEBI:24875"/>
        <label>2</label>
    </ligand>
</feature>
<feature type="binding site" evidence="2">
    <location>
        <position position="108"/>
    </location>
    <ligand>
        <name>Fe cation</name>
        <dbReference type="ChEBI" id="CHEBI:24875"/>
        <label>3</label>
    </ligand>
</feature>
<feature type="binding site" evidence="2">
    <location>
        <position position="141"/>
    </location>
    <ligand>
        <name>Fe cation</name>
        <dbReference type="ChEBI" id="CHEBI:24875"/>
        <label>2</label>
    </ligand>
</feature>
<feature type="binding site" evidence="2">
    <location>
        <position position="145"/>
    </location>
    <ligand>
        <name>Fe cation</name>
        <dbReference type="ChEBI" id="CHEBI:24875"/>
        <label>1</label>
    </ligand>
</feature>
<feature type="sequence variant" description="Found in purple petals of mutant line cornflowers; most likely decreases iron transport activity." evidence="4">
    <original>A</original>
    <variation>E</variation>
    <location>
        <position position="236"/>
    </location>
</feature>
<feature type="mutagenesis site" description="Failure to complement the growth defect of yeast cells deficient in the CCC1 transporter when grown in the presence of FeSO(4)." evidence="4">
    <original>A</original>
    <variation>E</variation>
    <location>
        <position position="236"/>
    </location>
</feature>
<reference evidence="7" key="1">
    <citation type="journal article" date="2013" name="Phytochemistry">
        <title>The identification of a vacuolar iron transporter involved in the blue coloration of cornflower petals.</title>
        <authorList>
            <person name="Yoshida K."/>
            <person name="Negishi T."/>
        </authorList>
    </citation>
    <scope>NUCLEOTIDE SEQUENCE [MRNA]</scope>
    <scope>FUNCTION</scope>
    <scope>TRANSPORTER ACTIVITY</scope>
    <scope>TISSUE SPECIFICITY</scope>
    <scope>DEVELOPMENTAL STAGE</scope>
    <scope>VARIANT GLU-236</scope>
    <scope>MUTAGENESIS OF ALA-236</scope>
    <source>
        <tissue evidence="7">Petal</tissue>
    </source>
</reference>
<gene>
    <name evidence="7" type="primary">VIT</name>
</gene>
<name>VIT_CENCY</name>
<proteinExistence type="evidence at protein level"/>
<organism evidence="7">
    <name type="scientific">Centaurea cyanus</name>
    <name type="common">Garden cornflower</name>
    <name type="synonym">Centaurea segetum</name>
    <dbReference type="NCBI Taxonomy" id="41522"/>
    <lineage>
        <taxon>Eukaryota</taxon>
        <taxon>Viridiplantae</taxon>
        <taxon>Streptophyta</taxon>
        <taxon>Embryophyta</taxon>
        <taxon>Tracheophyta</taxon>
        <taxon>Spermatophyta</taxon>
        <taxon>Magnoliopsida</taxon>
        <taxon>eudicotyledons</taxon>
        <taxon>Gunneridae</taxon>
        <taxon>Pentapetalae</taxon>
        <taxon>asterids</taxon>
        <taxon>campanulids</taxon>
        <taxon>Asterales</taxon>
        <taxon>Asteraceae</taxon>
        <taxon>Carduoideae</taxon>
        <taxon>Cardueae</taxon>
        <taxon>Centaureinae</taxon>
        <taxon>Centaurea</taxon>
    </lineage>
</organism>
<protein>
    <recommendedName>
        <fullName evidence="5">Vacuolar iron transporter</fullName>
        <shortName evidence="5">CcVIT</shortName>
    </recommendedName>
</protein>
<evidence type="ECO:0000250" key="1">
    <source>
        <dbReference type="UniProtKB" id="C4B8E3"/>
    </source>
</evidence>
<evidence type="ECO:0000250" key="2">
    <source>
        <dbReference type="UniProtKB" id="P0DO17"/>
    </source>
</evidence>
<evidence type="ECO:0000255" key="3"/>
<evidence type="ECO:0000269" key="4">
    <source>
    </source>
</evidence>
<evidence type="ECO:0000303" key="5">
    <source>
    </source>
</evidence>
<evidence type="ECO:0000305" key="6"/>
<evidence type="ECO:0000312" key="7">
    <source>
        <dbReference type="EMBL" id="BAO52026.1"/>
    </source>
</evidence>
<keyword id="KW-0406">Ion transport</keyword>
<keyword id="KW-0408">Iron</keyword>
<keyword id="KW-0410">Iron transport</keyword>
<keyword id="KW-0472">Membrane</keyword>
<keyword id="KW-0479">Metal-binding</keyword>
<keyword id="KW-0812">Transmembrane</keyword>
<keyword id="KW-1133">Transmembrane helix</keyword>
<keyword id="KW-0813">Transport</keyword>
<keyword id="KW-0926">Vacuole</keyword>
<dbReference type="EMBL" id="AB619653">
    <property type="protein sequence ID" value="BAO52026.1"/>
    <property type="molecule type" value="mRNA"/>
</dbReference>
<dbReference type="SMR" id="W8VRG3"/>
<dbReference type="GO" id="GO:0005774">
    <property type="term" value="C:vacuolar membrane"/>
    <property type="evidence" value="ECO:0007669"/>
    <property type="project" value="UniProtKB-SubCell"/>
</dbReference>
<dbReference type="GO" id="GO:0005384">
    <property type="term" value="F:manganese ion transmembrane transporter activity"/>
    <property type="evidence" value="ECO:0007669"/>
    <property type="project" value="InterPro"/>
</dbReference>
<dbReference type="GO" id="GO:0046872">
    <property type="term" value="F:metal ion binding"/>
    <property type="evidence" value="ECO:0007669"/>
    <property type="project" value="UniProtKB-KW"/>
</dbReference>
<dbReference type="GO" id="GO:0030026">
    <property type="term" value="P:intracellular manganese ion homeostasis"/>
    <property type="evidence" value="ECO:0007669"/>
    <property type="project" value="InterPro"/>
</dbReference>
<dbReference type="GO" id="GO:0006826">
    <property type="term" value="P:iron ion transport"/>
    <property type="evidence" value="ECO:0007669"/>
    <property type="project" value="UniProtKB-KW"/>
</dbReference>
<dbReference type="CDD" id="cd02435">
    <property type="entry name" value="CCC1"/>
    <property type="match status" value="1"/>
</dbReference>
<dbReference type="InterPro" id="IPR008217">
    <property type="entry name" value="Ccc1_fam"/>
</dbReference>
<dbReference type="PANTHER" id="PTHR31851">
    <property type="entry name" value="FE(2+)/MN(2+) TRANSPORTER PCL1"/>
    <property type="match status" value="1"/>
</dbReference>
<dbReference type="Pfam" id="PF01988">
    <property type="entry name" value="VIT1"/>
    <property type="match status" value="1"/>
</dbReference>
<accession>W8VRG3</accession>